<proteinExistence type="inferred from homology"/>
<protein>
    <recommendedName>
        <fullName evidence="1">UPF0246 protein spr1405</fullName>
    </recommendedName>
</protein>
<comment type="similarity">
    <text evidence="1">Belongs to the UPF0246 family.</text>
</comment>
<feature type="chain" id="PRO_0000204010" description="UPF0246 protein spr1405">
    <location>
        <begin position="1"/>
        <end position="242"/>
    </location>
</feature>
<organism>
    <name type="scientific">Streptococcus pneumoniae (strain ATCC BAA-255 / R6)</name>
    <dbReference type="NCBI Taxonomy" id="171101"/>
    <lineage>
        <taxon>Bacteria</taxon>
        <taxon>Bacillati</taxon>
        <taxon>Bacillota</taxon>
        <taxon>Bacilli</taxon>
        <taxon>Lactobacillales</taxon>
        <taxon>Streptococcaceae</taxon>
        <taxon>Streptococcus</taxon>
    </lineage>
</organism>
<gene>
    <name type="ordered locus">spr1405</name>
</gene>
<evidence type="ECO:0000255" key="1">
    <source>
        <dbReference type="HAMAP-Rule" id="MF_00652"/>
    </source>
</evidence>
<name>Y1405_STRR6</name>
<accession>Q8DP23</accession>
<sequence>MKILIPTAKEMNTDLPSIEAIPLKPESQTVLDALALYSASQLESFYKVSAEKAAEEFQNIQALKRQTAQHYPALKLFDGLMYRNIKRDKLTEAEQDYLENHVFITSALYGVVPALSPMAPHRLDFLMKLKVAGKTLKSHWKAVYDEALKKEEVIFSLLSSEFETVFSKEIRAKMVTFKFMEDRGGQLKIHSTISKKARGAFLTALIENQVQTVGEARRLNFAGFVYREDLSQPQGLVFVKEV</sequence>
<reference key="1">
    <citation type="journal article" date="2001" name="J. Bacteriol.">
        <title>Genome of the bacterium Streptococcus pneumoniae strain R6.</title>
        <authorList>
            <person name="Hoskins J."/>
            <person name="Alborn W.E. Jr."/>
            <person name="Arnold J."/>
            <person name="Blaszczak L.C."/>
            <person name="Burgett S."/>
            <person name="DeHoff B.S."/>
            <person name="Estrem S.T."/>
            <person name="Fritz L."/>
            <person name="Fu D.-J."/>
            <person name="Fuller W."/>
            <person name="Geringer C."/>
            <person name="Gilmour R."/>
            <person name="Glass J.S."/>
            <person name="Khoja H."/>
            <person name="Kraft A.R."/>
            <person name="Lagace R.E."/>
            <person name="LeBlanc D.J."/>
            <person name="Lee L.N."/>
            <person name="Lefkowitz E.J."/>
            <person name="Lu J."/>
            <person name="Matsushima P."/>
            <person name="McAhren S.M."/>
            <person name="McHenney M."/>
            <person name="McLeaster K."/>
            <person name="Mundy C.W."/>
            <person name="Nicas T.I."/>
            <person name="Norris F.H."/>
            <person name="O'Gara M."/>
            <person name="Peery R.B."/>
            <person name="Robertson G.T."/>
            <person name="Rockey P."/>
            <person name="Sun P.-M."/>
            <person name="Winkler M.E."/>
            <person name="Yang Y."/>
            <person name="Young-Bellido M."/>
            <person name="Zhao G."/>
            <person name="Zook C.A."/>
            <person name="Baltz R.H."/>
            <person name="Jaskunas S.R."/>
            <person name="Rosteck P.R. Jr."/>
            <person name="Skatrud P.L."/>
            <person name="Glass J.I."/>
        </authorList>
    </citation>
    <scope>NUCLEOTIDE SEQUENCE [LARGE SCALE GENOMIC DNA]</scope>
    <source>
        <strain>ATCC BAA-255 / R6</strain>
    </source>
</reference>
<keyword id="KW-1185">Reference proteome</keyword>
<dbReference type="EMBL" id="AE007317">
    <property type="protein sequence ID" value="AAL00209.1"/>
    <property type="molecule type" value="Genomic_DNA"/>
</dbReference>
<dbReference type="PIR" id="D98047">
    <property type="entry name" value="D98047"/>
</dbReference>
<dbReference type="RefSeq" id="NP_358998.1">
    <property type="nucleotide sequence ID" value="NC_003098.1"/>
</dbReference>
<dbReference type="SMR" id="Q8DP23"/>
<dbReference type="STRING" id="171101.spr1405"/>
<dbReference type="DNASU" id="934628"/>
<dbReference type="KEGG" id="spr:spr1405"/>
<dbReference type="PATRIC" id="fig|171101.6.peg.1520"/>
<dbReference type="eggNOG" id="COG3022">
    <property type="taxonomic scope" value="Bacteria"/>
</dbReference>
<dbReference type="HOGENOM" id="CLU_061989_2_1_9"/>
<dbReference type="Proteomes" id="UP000000586">
    <property type="component" value="Chromosome"/>
</dbReference>
<dbReference type="GO" id="GO:0005829">
    <property type="term" value="C:cytosol"/>
    <property type="evidence" value="ECO:0000318"/>
    <property type="project" value="GO_Central"/>
</dbReference>
<dbReference type="GO" id="GO:0033194">
    <property type="term" value="P:response to hydroperoxide"/>
    <property type="evidence" value="ECO:0000318"/>
    <property type="project" value="GO_Central"/>
</dbReference>
<dbReference type="HAMAP" id="MF_00652">
    <property type="entry name" value="UPF0246"/>
    <property type="match status" value="1"/>
</dbReference>
<dbReference type="InterPro" id="IPR005583">
    <property type="entry name" value="YaaA"/>
</dbReference>
<dbReference type="NCBIfam" id="NF002543">
    <property type="entry name" value="PRK02101.1-4"/>
    <property type="match status" value="1"/>
</dbReference>
<dbReference type="PANTHER" id="PTHR30283:SF4">
    <property type="entry name" value="PEROXIDE STRESS RESISTANCE PROTEIN YAAA"/>
    <property type="match status" value="1"/>
</dbReference>
<dbReference type="PANTHER" id="PTHR30283">
    <property type="entry name" value="PEROXIDE STRESS RESPONSE PROTEIN YAAA"/>
    <property type="match status" value="1"/>
</dbReference>
<dbReference type="Pfam" id="PF03883">
    <property type="entry name" value="H2O2_YaaD"/>
    <property type="match status" value="1"/>
</dbReference>